<organism>
    <name type="scientific">Chlorobaculum tepidum (strain ATCC 49652 / DSM 12025 / NBRC 103806 / TLS)</name>
    <name type="common">Chlorobium tepidum</name>
    <dbReference type="NCBI Taxonomy" id="194439"/>
    <lineage>
        <taxon>Bacteria</taxon>
        <taxon>Pseudomonadati</taxon>
        <taxon>Chlorobiota</taxon>
        <taxon>Chlorobiia</taxon>
        <taxon>Chlorobiales</taxon>
        <taxon>Chlorobiaceae</taxon>
        <taxon>Chlorobaculum</taxon>
    </lineage>
</organism>
<keyword id="KW-1185">Reference proteome</keyword>
<keyword id="KW-0687">Ribonucleoprotein</keyword>
<keyword id="KW-0689">Ribosomal protein</keyword>
<keyword id="KW-0694">RNA-binding</keyword>
<keyword id="KW-0699">rRNA-binding</keyword>
<proteinExistence type="inferred from homology"/>
<gene>
    <name evidence="1" type="primary">rplI</name>
    <name type="ordered locus">CT2132</name>
</gene>
<feature type="chain" id="PRO_0000176630" description="Large ribosomal subunit protein bL9">
    <location>
        <begin position="1"/>
        <end position="152"/>
    </location>
</feature>
<name>RL9_CHLTE</name>
<reference key="1">
    <citation type="journal article" date="2002" name="Proc. Natl. Acad. Sci. U.S.A.">
        <title>The complete genome sequence of Chlorobium tepidum TLS, a photosynthetic, anaerobic, green-sulfur bacterium.</title>
        <authorList>
            <person name="Eisen J.A."/>
            <person name="Nelson K.E."/>
            <person name="Paulsen I.T."/>
            <person name="Heidelberg J.F."/>
            <person name="Wu M."/>
            <person name="Dodson R.J."/>
            <person name="DeBoy R.T."/>
            <person name="Gwinn M.L."/>
            <person name="Nelson W.C."/>
            <person name="Haft D.H."/>
            <person name="Hickey E.K."/>
            <person name="Peterson J.D."/>
            <person name="Durkin A.S."/>
            <person name="Kolonay J.F."/>
            <person name="Yang F."/>
            <person name="Holt I.E."/>
            <person name="Umayam L.A."/>
            <person name="Mason T.M."/>
            <person name="Brenner M."/>
            <person name="Shea T.P."/>
            <person name="Parksey D.S."/>
            <person name="Nierman W.C."/>
            <person name="Feldblyum T.V."/>
            <person name="Hansen C.L."/>
            <person name="Craven M.B."/>
            <person name="Radune D."/>
            <person name="Vamathevan J.J."/>
            <person name="Khouri H.M."/>
            <person name="White O."/>
            <person name="Gruber T.M."/>
            <person name="Ketchum K.A."/>
            <person name="Venter J.C."/>
            <person name="Tettelin H."/>
            <person name="Bryant D.A."/>
            <person name="Fraser C.M."/>
        </authorList>
    </citation>
    <scope>NUCLEOTIDE SEQUENCE [LARGE SCALE GENOMIC DNA]</scope>
    <source>
        <strain>ATCC 49652 / DSM 12025 / NBRC 103806 / TLS</strain>
    </source>
</reference>
<sequence>MKIILRKDVATLGDAGEVVTVKNGYANNYLIPQGYAIRATEGTLKALETEKKQQARKIELQRTNARELAAKIEQMTLKVLAKAGESGKLFGTVTAGDIAEALKAQGVDIDRRKIHLEAPIKALGKYEADAKLFMDITAKLSIEVEAEGASEE</sequence>
<dbReference type="EMBL" id="AE006470">
    <property type="protein sequence ID" value="AAM73348.1"/>
    <property type="molecule type" value="Genomic_DNA"/>
</dbReference>
<dbReference type="RefSeq" id="NP_663006.1">
    <property type="nucleotide sequence ID" value="NC_002932.3"/>
</dbReference>
<dbReference type="RefSeq" id="WP_010933786.1">
    <property type="nucleotide sequence ID" value="NC_002932.3"/>
</dbReference>
<dbReference type="SMR" id="Q8KAM4"/>
<dbReference type="STRING" id="194439.CT2132"/>
<dbReference type="EnsemblBacteria" id="AAM73348">
    <property type="protein sequence ID" value="AAM73348"/>
    <property type="gene ID" value="CT2132"/>
</dbReference>
<dbReference type="KEGG" id="cte:CT2132"/>
<dbReference type="PATRIC" id="fig|194439.7.peg.1933"/>
<dbReference type="eggNOG" id="COG0359">
    <property type="taxonomic scope" value="Bacteria"/>
</dbReference>
<dbReference type="HOGENOM" id="CLU_078938_3_0_10"/>
<dbReference type="OrthoDB" id="9788336at2"/>
<dbReference type="Proteomes" id="UP000001007">
    <property type="component" value="Chromosome"/>
</dbReference>
<dbReference type="GO" id="GO:1990904">
    <property type="term" value="C:ribonucleoprotein complex"/>
    <property type="evidence" value="ECO:0007669"/>
    <property type="project" value="UniProtKB-KW"/>
</dbReference>
<dbReference type="GO" id="GO:0005840">
    <property type="term" value="C:ribosome"/>
    <property type="evidence" value="ECO:0007669"/>
    <property type="project" value="UniProtKB-KW"/>
</dbReference>
<dbReference type="GO" id="GO:0019843">
    <property type="term" value="F:rRNA binding"/>
    <property type="evidence" value="ECO:0007669"/>
    <property type="project" value="UniProtKB-UniRule"/>
</dbReference>
<dbReference type="GO" id="GO:0003735">
    <property type="term" value="F:structural constituent of ribosome"/>
    <property type="evidence" value="ECO:0007669"/>
    <property type="project" value="InterPro"/>
</dbReference>
<dbReference type="GO" id="GO:0006412">
    <property type="term" value="P:translation"/>
    <property type="evidence" value="ECO:0007669"/>
    <property type="project" value="UniProtKB-UniRule"/>
</dbReference>
<dbReference type="FunFam" id="3.40.5.10:FF:000003">
    <property type="entry name" value="50S ribosomal protein L9"/>
    <property type="match status" value="1"/>
</dbReference>
<dbReference type="Gene3D" id="3.10.430.100">
    <property type="entry name" value="Ribosomal protein L9, C-terminal domain"/>
    <property type="match status" value="1"/>
</dbReference>
<dbReference type="Gene3D" id="3.40.5.10">
    <property type="entry name" value="Ribosomal protein L9, N-terminal domain"/>
    <property type="match status" value="1"/>
</dbReference>
<dbReference type="HAMAP" id="MF_00503">
    <property type="entry name" value="Ribosomal_bL9"/>
    <property type="match status" value="1"/>
</dbReference>
<dbReference type="InterPro" id="IPR000244">
    <property type="entry name" value="Ribosomal_bL9"/>
</dbReference>
<dbReference type="InterPro" id="IPR009027">
    <property type="entry name" value="Ribosomal_bL9/RNase_H1_N"/>
</dbReference>
<dbReference type="InterPro" id="IPR020594">
    <property type="entry name" value="Ribosomal_bL9_bac/chp"/>
</dbReference>
<dbReference type="InterPro" id="IPR020069">
    <property type="entry name" value="Ribosomal_bL9_C"/>
</dbReference>
<dbReference type="InterPro" id="IPR036791">
    <property type="entry name" value="Ribosomal_bL9_C_sf"/>
</dbReference>
<dbReference type="InterPro" id="IPR020070">
    <property type="entry name" value="Ribosomal_bL9_N"/>
</dbReference>
<dbReference type="InterPro" id="IPR036935">
    <property type="entry name" value="Ribosomal_bL9_N_sf"/>
</dbReference>
<dbReference type="NCBIfam" id="TIGR00158">
    <property type="entry name" value="L9"/>
    <property type="match status" value="1"/>
</dbReference>
<dbReference type="PANTHER" id="PTHR21368">
    <property type="entry name" value="50S RIBOSOMAL PROTEIN L9"/>
    <property type="match status" value="1"/>
</dbReference>
<dbReference type="Pfam" id="PF03948">
    <property type="entry name" value="Ribosomal_L9_C"/>
    <property type="match status" value="1"/>
</dbReference>
<dbReference type="Pfam" id="PF01281">
    <property type="entry name" value="Ribosomal_L9_N"/>
    <property type="match status" value="1"/>
</dbReference>
<dbReference type="SUPFAM" id="SSF55658">
    <property type="entry name" value="L9 N-domain-like"/>
    <property type="match status" value="1"/>
</dbReference>
<dbReference type="SUPFAM" id="SSF55653">
    <property type="entry name" value="Ribosomal protein L9 C-domain"/>
    <property type="match status" value="1"/>
</dbReference>
<dbReference type="PROSITE" id="PS00651">
    <property type="entry name" value="RIBOSOMAL_L9"/>
    <property type="match status" value="1"/>
</dbReference>
<comment type="function">
    <text evidence="1">Binds to the 23S rRNA.</text>
</comment>
<comment type="similarity">
    <text evidence="1">Belongs to the bacterial ribosomal protein bL9 family.</text>
</comment>
<protein>
    <recommendedName>
        <fullName evidence="1">Large ribosomal subunit protein bL9</fullName>
    </recommendedName>
    <alternativeName>
        <fullName evidence="2">50S ribosomal protein L9</fullName>
    </alternativeName>
</protein>
<evidence type="ECO:0000255" key="1">
    <source>
        <dbReference type="HAMAP-Rule" id="MF_00503"/>
    </source>
</evidence>
<evidence type="ECO:0000305" key="2"/>
<accession>Q8KAM4</accession>